<protein>
    <recommendedName>
        <fullName>Pyruvate synthase subunit PorC</fullName>
        <ecNumber>1.2.7.1</ecNumber>
    </recommendedName>
    <alternativeName>
        <fullName>Pyruvate oxidoreductase gamma chain</fullName>
        <shortName>POR</shortName>
    </alternativeName>
    <alternativeName>
        <fullName>Pyruvic-ferredoxin oxidoreductase subunit gamma</fullName>
    </alternativeName>
</protein>
<gene>
    <name type="primary">porC</name>
    <name type="ordered locus">MTBMA_c03160</name>
</gene>
<accession>P80902</accession>
<accession>D9PUM4</accession>
<organism>
    <name type="scientific">Methanothermobacter marburgensis (strain ATCC BAA-927 / DSM 2133 / JCM 14651 / NBRC 100331 / OCM 82 / Marburg)</name>
    <name type="common">Methanobacterium thermoautotrophicum</name>
    <dbReference type="NCBI Taxonomy" id="79929"/>
    <lineage>
        <taxon>Archaea</taxon>
        <taxon>Methanobacteriati</taxon>
        <taxon>Methanobacteriota</taxon>
        <taxon>Methanomada group</taxon>
        <taxon>Methanobacteria</taxon>
        <taxon>Methanobacteriales</taxon>
        <taxon>Methanobacteriaceae</taxon>
        <taxon>Methanothermobacter</taxon>
    </lineage>
</organism>
<dbReference type="EC" id="1.2.7.1"/>
<dbReference type="EMBL" id="CP001710">
    <property type="protein sequence ID" value="ADL57922.1"/>
    <property type="molecule type" value="Genomic_DNA"/>
</dbReference>
<dbReference type="RefSeq" id="WP_013295149.1">
    <property type="nucleotide sequence ID" value="NC_014408.1"/>
</dbReference>
<dbReference type="SMR" id="P80902"/>
<dbReference type="STRING" id="79929.MTBMA_c03160"/>
<dbReference type="PaxDb" id="79929-MTBMA_c03160"/>
<dbReference type="GeneID" id="77399099"/>
<dbReference type="GeneID" id="9704022"/>
<dbReference type="KEGG" id="mmg:MTBMA_c03160"/>
<dbReference type="HOGENOM" id="CLU_087284_2_0_2"/>
<dbReference type="OrthoDB" id="372091at2157"/>
<dbReference type="Proteomes" id="UP000000345">
    <property type="component" value="Chromosome"/>
</dbReference>
<dbReference type="GO" id="GO:0019164">
    <property type="term" value="F:pyruvate synthase activity"/>
    <property type="evidence" value="ECO:0007669"/>
    <property type="project" value="UniProtKB-EC"/>
</dbReference>
<dbReference type="Gene3D" id="3.40.920.10">
    <property type="entry name" value="Pyruvate-ferredoxin oxidoreductase, PFOR, domain III"/>
    <property type="match status" value="1"/>
</dbReference>
<dbReference type="InterPro" id="IPR051626">
    <property type="entry name" value="Oxidoreductase_gamma_subunit"/>
</dbReference>
<dbReference type="InterPro" id="IPR011894">
    <property type="entry name" value="PorC_KorC"/>
</dbReference>
<dbReference type="InterPro" id="IPR053412">
    <property type="entry name" value="Pyruvate_synthase_PorC"/>
</dbReference>
<dbReference type="InterPro" id="IPR019752">
    <property type="entry name" value="Pyrv/ketoisovalerate_OxRed_cat"/>
</dbReference>
<dbReference type="InterPro" id="IPR002869">
    <property type="entry name" value="Pyrv_flavodox_OxRed_cen"/>
</dbReference>
<dbReference type="NCBIfam" id="TIGR02175">
    <property type="entry name" value="PorC_KorC"/>
    <property type="match status" value="1"/>
</dbReference>
<dbReference type="NCBIfam" id="NF040683">
    <property type="entry name" value="PorC_Meth_Thtga"/>
    <property type="match status" value="1"/>
</dbReference>
<dbReference type="NCBIfam" id="NF006321">
    <property type="entry name" value="PRK08534.1"/>
    <property type="match status" value="1"/>
</dbReference>
<dbReference type="PANTHER" id="PTHR43366">
    <property type="entry name" value="PYRUVATE SYNTHASE SUBUNIT PORC"/>
    <property type="match status" value="1"/>
</dbReference>
<dbReference type="PANTHER" id="PTHR43366:SF1">
    <property type="entry name" value="PYRUVATE SYNTHASE SUBUNIT PORC"/>
    <property type="match status" value="1"/>
</dbReference>
<dbReference type="Pfam" id="PF01558">
    <property type="entry name" value="POR"/>
    <property type="match status" value="1"/>
</dbReference>
<dbReference type="SUPFAM" id="SSF53323">
    <property type="entry name" value="Pyruvate-ferredoxin oxidoreductase, PFOR, domain III"/>
    <property type="match status" value="1"/>
</dbReference>
<name>PORC_METTM</name>
<sequence>MIEIRFHGRGGQGAVTAAEILAKAAFEDGKYSQAFPFFGVERRGAPVMAFTRINDEPIRRRYQVYNPDYVVVLDEGLVDVVDVFSGLKEDGVVLLNTAGTFTSENAKIHTIDATGIALENLGRPIVNTVMLGAFAGVTGLVSIDSLIKIIKETFPGKIGDKNAEAARIAYEKMKHSG</sequence>
<proteinExistence type="evidence at protein level"/>
<reference key="1">
    <citation type="journal article" date="2010" name="J. Bacteriol.">
        <title>Complete genome sequence of Methanothermobacter marburgensis, a methanoarchaeon model organism.</title>
        <authorList>
            <person name="Liesegang H."/>
            <person name="Kaster A.K."/>
            <person name="Wiezer A."/>
            <person name="Goenrich M."/>
            <person name="Wollherr A."/>
            <person name="Seedorf H."/>
            <person name="Gottschalk G."/>
            <person name="Thauer R.K."/>
        </authorList>
    </citation>
    <scope>NUCLEOTIDE SEQUENCE [LARGE SCALE GENOMIC DNA]</scope>
    <source>
        <strain>ATCC BAA-927 / DSM 2133 / JCM 14651 / NBRC 100331 / OCM 82 / Marburg</strain>
    </source>
</reference>
<reference key="2">
    <citation type="journal article" date="1997" name="Eur. J. Biochem.">
        <title>Structures and functions of four anabolic 2-oxoacid oxidoreductases in Methanobacterium thermoautotrophicum.</title>
        <authorList>
            <person name="Tersteegen A."/>
            <person name="Linder D."/>
            <person name="Thauer R.K."/>
            <person name="Hedderich R."/>
        </authorList>
    </citation>
    <scope>PROTEIN SEQUENCE OF 1-20</scope>
    <scope>BIOPHYSICOCHEMICAL PROPERTIES</scope>
    <scope>SUBUNIT</scope>
    <source>
        <strain>ATCC BAA-927 / DSM 2133 / JCM 14651 / NBRC 100331 / OCM 82 / Marburg</strain>
    </source>
</reference>
<feature type="chain" id="PRO_0000099912" description="Pyruvate synthase subunit PorC">
    <location>
        <begin position="1"/>
        <end position="177"/>
    </location>
</feature>
<evidence type="ECO:0000269" key="1">
    <source>
    </source>
</evidence>
<keyword id="KW-0903">Direct protein sequencing</keyword>
<keyword id="KW-0560">Oxidoreductase</keyword>
<comment type="catalytic activity">
    <reaction>
        <text>2 oxidized [2Fe-2S]-[ferredoxin] + pyruvate + CoA = 2 reduced [2Fe-2S]-[ferredoxin] + acetyl-CoA + CO2 + H(+)</text>
        <dbReference type="Rhea" id="RHEA:12765"/>
        <dbReference type="Rhea" id="RHEA-COMP:10000"/>
        <dbReference type="Rhea" id="RHEA-COMP:10001"/>
        <dbReference type="ChEBI" id="CHEBI:15361"/>
        <dbReference type="ChEBI" id="CHEBI:15378"/>
        <dbReference type="ChEBI" id="CHEBI:16526"/>
        <dbReference type="ChEBI" id="CHEBI:33737"/>
        <dbReference type="ChEBI" id="CHEBI:33738"/>
        <dbReference type="ChEBI" id="CHEBI:57287"/>
        <dbReference type="ChEBI" id="CHEBI:57288"/>
        <dbReference type="EC" id="1.2.7.1"/>
    </reaction>
</comment>
<comment type="biophysicochemical properties">
    <phDependence>
        <text evidence="1">Optimum pH is 10.0.</text>
    </phDependence>
    <temperatureDependence>
        <text evidence="1">Optimum temperature is 80 degrees Celsius.</text>
    </temperatureDependence>
</comment>
<comment type="subunit">
    <text evidence="1">Heterotetramer of one alpha, one beta, one delta and one gamma chain.</text>
</comment>